<evidence type="ECO:0000255" key="1">
    <source>
        <dbReference type="PROSITE-ProRule" id="PRU00160"/>
    </source>
</evidence>
<evidence type="ECO:0000305" key="2"/>
<dbReference type="EC" id="3.1.3.48"/>
<dbReference type="EMBL" id="U75930">
    <property type="protein sequence ID" value="AAC59009.1"/>
    <property type="molecule type" value="Genomic_DNA"/>
</dbReference>
<dbReference type="RefSeq" id="NP_046166.1">
    <property type="nucleotide sequence ID" value="NC_001875.2"/>
</dbReference>
<dbReference type="SMR" id="O10274"/>
<dbReference type="KEGG" id="vg:912096"/>
<dbReference type="OrthoDB" id="10871at10239"/>
<dbReference type="Proteomes" id="UP000009248">
    <property type="component" value="Genome"/>
</dbReference>
<dbReference type="GO" id="GO:0004651">
    <property type="term" value="F:polynucleotide 5'-phosphatase activity"/>
    <property type="evidence" value="ECO:0007669"/>
    <property type="project" value="TreeGrafter"/>
</dbReference>
<dbReference type="GO" id="GO:0004725">
    <property type="term" value="F:protein tyrosine phosphatase activity"/>
    <property type="evidence" value="ECO:0007669"/>
    <property type="project" value="UniProtKB-EC"/>
</dbReference>
<dbReference type="Gene3D" id="3.90.190.10">
    <property type="entry name" value="Protein tyrosine phosphatase superfamily"/>
    <property type="match status" value="1"/>
</dbReference>
<dbReference type="InterPro" id="IPR000340">
    <property type="entry name" value="Dual-sp_phosphatase_cat-dom"/>
</dbReference>
<dbReference type="InterPro" id="IPR051029">
    <property type="entry name" value="mRNA_Capping_Enz/RNA_Phosphat"/>
</dbReference>
<dbReference type="InterPro" id="IPR029021">
    <property type="entry name" value="Prot-tyrosine_phosphatase-like"/>
</dbReference>
<dbReference type="InterPro" id="IPR000387">
    <property type="entry name" value="Tyr_Pase_dom"/>
</dbReference>
<dbReference type="InterPro" id="IPR020422">
    <property type="entry name" value="TYR_PHOSPHATASE_DUAL_dom"/>
</dbReference>
<dbReference type="PANTHER" id="PTHR10367:SF9">
    <property type="entry name" value="DUAL-SPECIFICITY PHOSPHATASE 11 (RNA_RNP COMPLEX 1-INTERACTING)"/>
    <property type="match status" value="1"/>
</dbReference>
<dbReference type="PANTHER" id="PTHR10367">
    <property type="entry name" value="MRNA-CAPPING ENZYME"/>
    <property type="match status" value="1"/>
</dbReference>
<dbReference type="Pfam" id="PF00782">
    <property type="entry name" value="DSPc"/>
    <property type="match status" value="1"/>
</dbReference>
<dbReference type="SUPFAM" id="SSF52799">
    <property type="entry name" value="(Phosphotyrosine protein) phosphatases II"/>
    <property type="match status" value="1"/>
</dbReference>
<dbReference type="PROSITE" id="PS50056">
    <property type="entry name" value="TYR_PHOSPHATASE_2"/>
    <property type="match status" value="1"/>
</dbReference>
<dbReference type="PROSITE" id="PS50054">
    <property type="entry name" value="TYR_PHOSPHATASE_DUAL"/>
    <property type="match status" value="1"/>
</dbReference>
<comment type="function">
    <text>Could be inactive as the active site cysteine is modified to tryptophan.</text>
</comment>
<comment type="catalytic activity">
    <reaction>
        <text>O-phospho-L-tyrosyl-[protein] + H2O = L-tyrosyl-[protein] + phosphate</text>
        <dbReference type="Rhea" id="RHEA:10684"/>
        <dbReference type="Rhea" id="RHEA-COMP:10136"/>
        <dbReference type="Rhea" id="RHEA-COMP:20101"/>
        <dbReference type="ChEBI" id="CHEBI:15377"/>
        <dbReference type="ChEBI" id="CHEBI:43474"/>
        <dbReference type="ChEBI" id="CHEBI:46858"/>
        <dbReference type="ChEBI" id="CHEBI:61978"/>
        <dbReference type="EC" id="3.1.3.48"/>
    </reaction>
</comment>
<comment type="similarity">
    <text evidence="2">Belongs to the protein-tyrosine phosphatase family. Non-receptor class CDC14 subfamily.</text>
</comment>
<organism>
    <name type="scientific">Orgyia pseudotsugata multicapsid polyhedrosis virus</name>
    <name type="common">OpMNPV</name>
    <dbReference type="NCBI Taxonomy" id="262177"/>
    <lineage>
        <taxon>Viruses</taxon>
        <taxon>Viruses incertae sedis</taxon>
        <taxon>Naldaviricetes</taxon>
        <taxon>Lefavirales</taxon>
        <taxon>Baculoviridae</taxon>
        <taxon>Alphabaculovirus</taxon>
        <taxon>Alphabaculovirus orpseudotsugatae</taxon>
    </lineage>
</organism>
<organismHost>
    <name type="scientific">Orgyia pseudotsugata</name>
    <name type="common">Douglas-fir tussock moth</name>
    <dbReference type="NCBI Taxonomy" id="33414"/>
</organismHost>
<reference key="1">
    <citation type="journal article" date="1997" name="Virology">
        <title>The sequence of the Orgyia pseudotsugata multinucleocapsid nuclear polyhedrosis virus genome.</title>
        <authorList>
            <person name="Ahrens C.H."/>
            <person name="Russell R.R."/>
            <person name="Funk C.J."/>
            <person name="Evans J."/>
            <person name="Harwood S."/>
            <person name="Rohrmann G.F."/>
        </authorList>
    </citation>
    <scope>NUCLEOTIDE SEQUENCE [LARGE SCALE GENOMIC DNA]</scope>
</reference>
<protein>
    <recommendedName>
        <fullName>Putative tyrosine-protein phosphatase 1</fullName>
        <shortName>Protein-tyrosine phosphatase 1</shortName>
        <ecNumber>3.1.3.48</ecNumber>
    </recommendedName>
</protein>
<sequence length="220" mass="25234">MLTSRRWAVIYTRTSERNCGGAWCTNGVRRRRQVHLPSVRARAMFPDRWHEYTACGAVIEGTRLLCFKVPLNAELFEYVTSDEDRWTAASVLARHSALGAVIDLTNTARYYDGAQMVKMGLLYKKIRVPGRAVPDDDIVAEFIETVDEFFRRCPTMLVAVHWTHGLNRSGYLVCRYMVERLGVSPTDAIARFETARGHKIERTNYLQDLLARKHVRGQPN</sequence>
<proteinExistence type="inferred from homology"/>
<feature type="chain" id="PRO_0000094882" description="Putative tyrosine-protein phosphatase 1">
    <location>
        <begin position="1"/>
        <end position="220"/>
    </location>
</feature>
<feature type="domain" description="Tyrosine-protein phosphatase" evidence="1">
    <location>
        <begin position="67"/>
        <end position="218"/>
    </location>
</feature>
<feature type="site" description="Equivalent of active site Cys">
    <location>
        <position position="162"/>
    </location>
</feature>
<keyword id="KW-0378">Hydrolase</keyword>
<keyword id="KW-0904">Protein phosphatase</keyword>
<keyword id="KW-1185">Reference proteome</keyword>
<accession>O10274</accession>
<name>PTP1_NPVOP</name>
<gene>
    <name type="primary">PTP-1</name>
    <name type="ORF">ORF10</name>
</gene>